<reference key="1">
    <citation type="journal article" date="2006" name="Mol. Microbiol.">
        <title>Role of pathogenicity island-associated integrases in the genome plasticity of uropathogenic Escherichia coli strain 536.</title>
        <authorList>
            <person name="Hochhut B."/>
            <person name="Wilde C."/>
            <person name="Balling G."/>
            <person name="Middendorf B."/>
            <person name="Dobrindt U."/>
            <person name="Brzuszkiewicz E."/>
            <person name="Gottschalk G."/>
            <person name="Carniel E."/>
            <person name="Hacker J."/>
        </authorList>
    </citation>
    <scope>NUCLEOTIDE SEQUENCE [LARGE SCALE GENOMIC DNA]</scope>
    <source>
        <strain>536 / UPEC</strain>
    </source>
</reference>
<protein>
    <recommendedName>
        <fullName evidence="1">DNA replication and repair protein RecF</fullName>
    </recommendedName>
</protein>
<organism>
    <name type="scientific">Escherichia coli O6:K15:H31 (strain 536 / UPEC)</name>
    <dbReference type="NCBI Taxonomy" id="362663"/>
    <lineage>
        <taxon>Bacteria</taxon>
        <taxon>Pseudomonadati</taxon>
        <taxon>Pseudomonadota</taxon>
        <taxon>Gammaproteobacteria</taxon>
        <taxon>Enterobacterales</taxon>
        <taxon>Enterobacteriaceae</taxon>
        <taxon>Escherichia</taxon>
    </lineage>
</organism>
<comment type="function">
    <text evidence="1">The RecF protein is involved in DNA metabolism; it is required for DNA replication and normal SOS inducibility. RecF binds preferentially to single-stranded, linear DNA. It also seems to bind ATP.</text>
</comment>
<comment type="subcellular location">
    <subcellularLocation>
        <location evidence="1">Cytoplasm</location>
    </subcellularLocation>
</comment>
<comment type="similarity">
    <text evidence="1">Belongs to the RecF family.</text>
</comment>
<gene>
    <name evidence="1" type="primary">recF</name>
    <name type="ordered locus">ECP_3901</name>
</gene>
<feature type="chain" id="PRO_1000048522" description="DNA replication and repair protein RecF">
    <location>
        <begin position="1"/>
        <end position="357"/>
    </location>
</feature>
<feature type="binding site" evidence="1">
    <location>
        <begin position="30"/>
        <end position="37"/>
    </location>
    <ligand>
        <name>ATP</name>
        <dbReference type="ChEBI" id="CHEBI:30616"/>
    </ligand>
</feature>
<evidence type="ECO:0000255" key="1">
    <source>
        <dbReference type="HAMAP-Rule" id="MF_00365"/>
    </source>
</evidence>
<name>RECF_ECOL5</name>
<sequence length="357" mass="40500">MSLTRLLIRDFRNIETADLALSPGFNFLVGANGSGKTSVLEAIYTLGHGRAFRSLQIGRVIRHEQEAFVLHGRLQGEERETAIGLTKDKQGDSKVRIDGTDGHKVAELAHLMPMQLITPEGFTLLNGGPKYRRAFLDWGCFHNEPGFFTAWSNLKRLLKQRNAALRQVTRYEQLRPWDKELIPLAEQISTWRAEYSGGIAADMADTCKQFLPEFSLTFSFQRGWEKETEYAEVLERNFERDRQLTYTAHGPHKADLRIRADGAPVEDTLSRGQLKLLMCALRLAQGEFLTRESGRRCLYLIDDFASELDDERRGLLASRLKATQSQVFVSAISAEHVIDMSDENSKMFTVEKGKITD</sequence>
<keyword id="KW-0067">ATP-binding</keyword>
<keyword id="KW-0963">Cytoplasm</keyword>
<keyword id="KW-0227">DNA damage</keyword>
<keyword id="KW-0234">DNA repair</keyword>
<keyword id="KW-0235">DNA replication</keyword>
<keyword id="KW-0238">DNA-binding</keyword>
<keyword id="KW-0547">Nucleotide-binding</keyword>
<keyword id="KW-0742">SOS response</keyword>
<accession>Q0TB07</accession>
<dbReference type="EMBL" id="CP000247">
    <property type="protein sequence ID" value="ABG71872.1"/>
    <property type="molecule type" value="Genomic_DNA"/>
</dbReference>
<dbReference type="RefSeq" id="WP_000060117.1">
    <property type="nucleotide sequence ID" value="NC_008253.1"/>
</dbReference>
<dbReference type="SMR" id="Q0TB07"/>
<dbReference type="KEGG" id="ecp:ECP_3901"/>
<dbReference type="HOGENOM" id="CLU_040267_0_0_6"/>
<dbReference type="Proteomes" id="UP000009182">
    <property type="component" value="Chromosome"/>
</dbReference>
<dbReference type="GO" id="GO:0005737">
    <property type="term" value="C:cytoplasm"/>
    <property type="evidence" value="ECO:0007669"/>
    <property type="project" value="UniProtKB-SubCell"/>
</dbReference>
<dbReference type="GO" id="GO:0005524">
    <property type="term" value="F:ATP binding"/>
    <property type="evidence" value="ECO:0007669"/>
    <property type="project" value="UniProtKB-UniRule"/>
</dbReference>
<dbReference type="GO" id="GO:0003697">
    <property type="term" value="F:single-stranded DNA binding"/>
    <property type="evidence" value="ECO:0007669"/>
    <property type="project" value="UniProtKB-UniRule"/>
</dbReference>
<dbReference type="GO" id="GO:0006260">
    <property type="term" value="P:DNA replication"/>
    <property type="evidence" value="ECO:0007669"/>
    <property type="project" value="UniProtKB-UniRule"/>
</dbReference>
<dbReference type="GO" id="GO:0000731">
    <property type="term" value="P:DNA synthesis involved in DNA repair"/>
    <property type="evidence" value="ECO:0007669"/>
    <property type="project" value="TreeGrafter"/>
</dbReference>
<dbReference type="GO" id="GO:0006302">
    <property type="term" value="P:double-strand break repair"/>
    <property type="evidence" value="ECO:0007669"/>
    <property type="project" value="TreeGrafter"/>
</dbReference>
<dbReference type="GO" id="GO:0009432">
    <property type="term" value="P:SOS response"/>
    <property type="evidence" value="ECO:0007669"/>
    <property type="project" value="UniProtKB-UniRule"/>
</dbReference>
<dbReference type="FunFam" id="1.20.1050.90:FF:000001">
    <property type="entry name" value="DNA replication and repair protein RecF"/>
    <property type="match status" value="1"/>
</dbReference>
<dbReference type="Gene3D" id="3.40.50.300">
    <property type="entry name" value="P-loop containing nucleotide triphosphate hydrolases"/>
    <property type="match status" value="1"/>
</dbReference>
<dbReference type="Gene3D" id="1.20.1050.90">
    <property type="entry name" value="RecF/RecN/SMC, N-terminal domain"/>
    <property type="match status" value="1"/>
</dbReference>
<dbReference type="HAMAP" id="MF_00365">
    <property type="entry name" value="RecF"/>
    <property type="match status" value="1"/>
</dbReference>
<dbReference type="InterPro" id="IPR001238">
    <property type="entry name" value="DNA-binding_RecF"/>
</dbReference>
<dbReference type="InterPro" id="IPR018078">
    <property type="entry name" value="DNA-binding_RecF_CS"/>
</dbReference>
<dbReference type="InterPro" id="IPR027417">
    <property type="entry name" value="P-loop_NTPase"/>
</dbReference>
<dbReference type="InterPro" id="IPR003395">
    <property type="entry name" value="RecF/RecN/SMC_N"/>
</dbReference>
<dbReference type="InterPro" id="IPR042174">
    <property type="entry name" value="RecF_2"/>
</dbReference>
<dbReference type="NCBIfam" id="TIGR00611">
    <property type="entry name" value="recf"/>
    <property type="match status" value="1"/>
</dbReference>
<dbReference type="PANTHER" id="PTHR32182">
    <property type="entry name" value="DNA REPLICATION AND REPAIR PROTEIN RECF"/>
    <property type="match status" value="1"/>
</dbReference>
<dbReference type="PANTHER" id="PTHR32182:SF0">
    <property type="entry name" value="DNA REPLICATION AND REPAIR PROTEIN RECF"/>
    <property type="match status" value="1"/>
</dbReference>
<dbReference type="Pfam" id="PF02463">
    <property type="entry name" value="SMC_N"/>
    <property type="match status" value="1"/>
</dbReference>
<dbReference type="SUPFAM" id="SSF52540">
    <property type="entry name" value="P-loop containing nucleoside triphosphate hydrolases"/>
    <property type="match status" value="1"/>
</dbReference>
<dbReference type="PROSITE" id="PS00617">
    <property type="entry name" value="RECF_1"/>
    <property type="match status" value="1"/>
</dbReference>
<dbReference type="PROSITE" id="PS00618">
    <property type="entry name" value="RECF_2"/>
    <property type="match status" value="1"/>
</dbReference>
<proteinExistence type="inferred from homology"/>